<reference key="1">
    <citation type="submission" date="2007-02" db="EMBL/GenBank/DDBJ databases">
        <title>Complete sequence of chromosome 2 of Rhodobacter sphaeroides ATCC 17029.</title>
        <authorList>
            <person name="Copeland A."/>
            <person name="Lucas S."/>
            <person name="Lapidus A."/>
            <person name="Barry K."/>
            <person name="Detter J.C."/>
            <person name="Glavina del Rio T."/>
            <person name="Hammon N."/>
            <person name="Israni S."/>
            <person name="Dalin E."/>
            <person name="Tice H."/>
            <person name="Pitluck S."/>
            <person name="Kiss H."/>
            <person name="Brettin T."/>
            <person name="Bruce D."/>
            <person name="Han C."/>
            <person name="Tapia R."/>
            <person name="Gilna P."/>
            <person name="Schmutz J."/>
            <person name="Larimer F."/>
            <person name="Land M."/>
            <person name="Hauser L."/>
            <person name="Kyrpides N."/>
            <person name="Mikhailova N."/>
            <person name="Richardson P."/>
            <person name="Mackenzie C."/>
            <person name="Choudhary M."/>
            <person name="Donohue T.J."/>
            <person name="Kaplan S."/>
        </authorList>
    </citation>
    <scope>NUCLEOTIDE SEQUENCE [LARGE SCALE GENOMIC DNA]</scope>
    <source>
        <strain>ATCC 17029 / ATH 2.4.9</strain>
    </source>
</reference>
<dbReference type="EMBL" id="CP000578">
    <property type="protein sequence ID" value="ABN78603.1"/>
    <property type="molecule type" value="Genomic_DNA"/>
</dbReference>
<dbReference type="RefSeq" id="WP_011842414.1">
    <property type="nucleotide sequence ID" value="NC_009050.1"/>
</dbReference>
<dbReference type="SMR" id="A3PQI7"/>
<dbReference type="KEGG" id="rsh:Rsph17029_3511"/>
<dbReference type="HOGENOM" id="CLU_061463_1_2_5"/>
<dbReference type="GO" id="GO:0005737">
    <property type="term" value="C:cytoplasm"/>
    <property type="evidence" value="ECO:0007669"/>
    <property type="project" value="UniProtKB-ARBA"/>
</dbReference>
<dbReference type="GO" id="GO:1990904">
    <property type="term" value="C:ribonucleoprotein complex"/>
    <property type="evidence" value="ECO:0007669"/>
    <property type="project" value="UniProtKB-KW"/>
</dbReference>
<dbReference type="GO" id="GO:0005840">
    <property type="term" value="C:ribosome"/>
    <property type="evidence" value="ECO:0007669"/>
    <property type="project" value="UniProtKB-KW"/>
</dbReference>
<dbReference type="GO" id="GO:0019843">
    <property type="term" value="F:rRNA binding"/>
    <property type="evidence" value="ECO:0007669"/>
    <property type="project" value="UniProtKB-UniRule"/>
</dbReference>
<dbReference type="GO" id="GO:0003735">
    <property type="term" value="F:structural constituent of ribosome"/>
    <property type="evidence" value="ECO:0007669"/>
    <property type="project" value="InterPro"/>
</dbReference>
<dbReference type="GO" id="GO:0006412">
    <property type="term" value="P:translation"/>
    <property type="evidence" value="ECO:0007669"/>
    <property type="project" value="UniProtKB-UniRule"/>
</dbReference>
<dbReference type="HAMAP" id="MF_01363">
    <property type="entry name" value="Ribosomal_bL21"/>
    <property type="match status" value="1"/>
</dbReference>
<dbReference type="InterPro" id="IPR028909">
    <property type="entry name" value="bL21-like"/>
</dbReference>
<dbReference type="InterPro" id="IPR036164">
    <property type="entry name" value="bL21-like_sf"/>
</dbReference>
<dbReference type="InterPro" id="IPR001787">
    <property type="entry name" value="Ribosomal_bL21"/>
</dbReference>
<dbReference type="NCBIfam" id="TIGR00061">
    <property type="entry name" value="L21"/>
    <property type="match status" value="1"/>
</dbReference>
<dbReference type="PANTHER" id="PTHR21349">
    <property type="entry name" value="50S RIBOSOMAL PROTEIN L21"/>
    <property type="match status" value="1"/>
</dbReference>
<dbReference type="PANTHER" id="PTHR21349:SF0">
    <property type="entry name" value="LARGE RIBOSOMAL SUBUNIT PROTEIN BL21M"/>
    <property type="match status" value="1"/>
</dbReference>
<dbReference type="Pfam" id="PF00829">
    <property type="entry name" value="Ribosomal_L21p"/>
    <property type="match status" value="1"/>
</dbReference>
<dbReference type="SUPFAM" id="SSF141091">
    <property type="entry name" value="L21p-like"/>
    <property type="match status" value="1"/>
</dbReference>
<evidence type="ECO:0000255" key="1">
    <source>
        <dbReference type="HAMAP-Rule" id="MF_01363"/>
    </source>
</evidence>
<evidence type="ECO:0000256" key="2">
    <source>
        <dbReference type="SAM" id="MobiDB-lite"/>
    </source>
</evidence>
<evidence type="ECO:0000305" key="3"/>
<name>RL21_CERS1</name>
<organism>
    <name type="scientific">Cereibacter sphaeroides (strain ATCC 17029 / ATH 2.4.9)</name>
    <name type="common">Rhodobacter sphaeroides</name>
    <dbReference type="NCBI Taxonomy" id="349101"/>
    <lineage>
        <taxon>Bacteria</taxon>
        <taxon>Pseudomonadati</taxon>
        <taxon>Pseudomonadota</taxon>
        <taxon>Alphaproteobacteria</taxon>
        <taxon>Rhodobacterales</taxon>
        <taxon>Paracoccaceae</taxon>
        <taxon>Cereibacter</taxon>
    </lineage>
</organism>
<accession>A3PQI7</accession>
<comment type="function">
    <text evidence="1">This protein binds to 23S rRNA in the presence of protein L20.</text>
</comment>
<comment type="subunit">
    <text evidence="1">Part of the 50S ribosomal subunit. Contacts protein L20.</text>
</comment>
<comment type="similarity">
    <text evidence="1">Belongs to the bacterial ribosomal protein bL21 family.</text>
</comment>
<protein>
    <recommendedName>
        <fullName evidence="1">Large ribosomal subunit protein bL21</fullName>
    </recommendedName>
    <alternativeName>
        <fullName evidence="3">50S ribosomal protein L21</fullName>
    </alternativeName>
</protein>
<gene>
    <name evidence="1" type="primary">rplU</name>
    <name type="ordered locus">Rsph17029_3511</name>
</gene>
<feature type="chain" id="PRO_1000067884" description="Large ribosomal subunit protein bL21">
    <location>
        <begin position="1"/>
        <end position="131"/>
    </location>
</feature>
<feature type="region of interest" description="Disordered" evidence="2">
    <location>
        <begin position="111"/>
        <end position="131"/>
    </location>
</feature>
<keyword id="KW-0687">Ribonucleoprotein</keyword>
<keyword id="KW-0689">Ribosomal protein</keyword>
<keyword id="KW-0694">RNA-binding</keyword>
<keyword id="KW-0699">rRNA-binding</keyword>
<sequence>MFAVLKTGGKQYKVQAGDVLRVEKLACEAGDKIQFNDILMVGGDSVTVGAPFVAGAAVQAEVIAQIKGEKTIHYVKRRRKHSSQRTKGHRQQLTLLRVTDVLASGADASGVAAATGTADARRAAHNASAKE</sequence>
<proteinExistence type="inferred from homology"/>